<proteinExistence type="inferred from homology"/>
<evidence type="ECO:0000255" key="1">
    <source>
        <dbReference type="HAMAP-Rule" id="MF_00028"/>
    </source>
</evidence>
<keyword id="KW-0169">Cobalamin biosynthesis</keyword>
<keyword id="KW-0315">Glutamine amidotransferase</keyword>
<keyword id="KW-1185">Reference proteome</keyword>
<accession>B8EQG6</accession>
<comment type="function">
    <text evidence="1">Catalyzes amidations at positions B, D, E, and G on adenosylcobyrinic A,C-diamide. NH(2) groups are provided by glutamine, and one molecule of ATP is hydrogenolyzed for each amidation.</text>
</comment>
<comment type="pathway">
    <text evidence="1">Cofactor biosynthesis; adenosylcobalamin biosynthesis.</text>
</comment>
<comment type="similarity">
    <text evidence="1">Belongs to the CobB/CobQ family. CobQ subfamily.</text>
</comment>
<organism>
    <name type="scientific">Methylocella silvestris (strain DSM 15510 / CIP 108128 / LMG 27833 / NCIMB 13906 / BL2)</name>
    <dbReference type="NCBI Taxonomy" id="395965"/>
    <lineage>
        <taxon>Bacteria</taxon>
        <taxon>Pseudomonadati</taxon>
        <taxon>Pseudomonadota</taxon>
        <taxon>Alphaproteobacteria</taxon>
        <taxon>Hyphomicrobiales</taxon>
        <taxon>Beijerinckiaceae</taxon>
        <taxon>Methylocella</taxon>
    </lineage>
</organism>
<protein>
    <recommendedName>
        <fullName evidence="1">Cobyric acid synthase</fullName>
    </recommendedName>
</protein>
<sequence>MIQGSGSDVGKSLIVAGLCRAYRNRGLKVLPFKPQNMSNNAAVTPDGGEIGRAQAMQALACGAPLSVDMNPVLLKPQTGNGAQIVVQGKVVGTAAARDYQQWKPKLLGAVLDSFSKLAAKADLIVVEGAGSASEVNLRQNDIANMGFARAAGVPVILVGDIDRGGVIAQIVGTKSVIAPEDAAMIQGFIINKFRGDPTLFADGMAFIAQRSGWPALGLIPFCAEAALLPAEDSFGLSTARPKGRGKILIAVPILPGIANFDDLDPLRLEPDVEIAMVRSGEVLPAEARLVLLPGSKTTIADLAAFRREGWDIDLAAHVRRGGHVIGLCGGYQMLGRTLRDPAGVEGPSGEAAGLGLLDVETELTGDKTLAPAVGASAADGAPFKGYEMHLGRTFGPGCAAPLLILADGRREGAVSADGRVSGSYVHGLFSELAQRASLLARLGGEGSGLSYEASIERALDAVANHLESHMDLDHLLTLAS</sequence>
<reference key="1">
    <citation type="journal article" date="2010" name="J. Bacteriol.">
        <title>Complete genome sequence of the aerobic facultative methanotroph Methylocella silvestris BL2.</title>
        <authorList>
            <person name="Chen Y."/>
            <person name="Crombie A."/>
            <person name="Rahman M.T."/>
            <person name="Dedysh S.N."/>
            <person name="Liesack W."/>
            <person name="Stott M.B."/>
            <person name="Alam M."/>
            <person name="Theisen A.R."/>
            <person name="Murrell J.C."/>
            <person name="Dunfield P.F."/>
        </authorList>
    </citation>
    <scope>NUCLEOTIDE SEQUENCE [LARGE SCALE GENOMIC DNA]</scope>
    <source>
        <strain>DSM 15510 / CIP 108128 / LMG 27833 / NCIMB 13906 / BL2</strain>
    </source>
</reference>
<dbReference type="EMBL" id="CP001280">
    <property type="protein sequence ID" value="ACK52179.1"/>
    <property type="molecule type" value="Genomic_DNA"/>
</dbReference>
<dbReference type="RefSeq" id="WP_012592248.1">
    <property type="nucleotide sequence ID" value="NC_011666.1"/>
</dbReference>
<dbReference type="SMR" id="B8EQG6"/>
<dbReference type="STRING" id="395965.Msil_3272"/>
<dbReference type="KEGG" id="msl:Msil_3272"/>
<dbReference type="eggNOG" id="COG1492">
    <property type="taxonomic scope" value="Bacteria"/>
</dbReference>
<dbReference type="HOGENOM" id="CLU_019250_2_2_5"/>
<dbReference type="OrthoDB" id="9808302at2"/>
<dbReference type="UniPathway" id="UPA00148"/>
<dbReference type="Proteomes" id="UP000002257">
    <property type="component" value="Chromosome"/>
</dbReference>
<dbReference type="GO" id="GO:0015420">
    <property type="term" value="F:ABC-type vitamin B12 transporter activity"/>
    <property type="evidence" value="ECO:0007669"/>
    <property type="project" value="UniProtKB-UniRule"/>
</dbReference>
<dbReference type="GO" id="GO:0003824">
    <property type="term" value="F:catalytic activity"/>
    <property type="evidence" value="ECO:0007669"/>
    <property type="project" value="InterPro"/>
</dbReference>
<dbReference type="GO" id="GO:0009236">
    <property type="term" value="P:cobalamin biosynthetic process"/>
    <property type="evidence" value="ECO:0007669"/>
    <property type="project" value="UniProtKB-UniRule"/>
</dbReference>
<dbReference type="CDD" id="cd05389">
    <property type="entry name" value="CobQ_N"/>
    <property type="match status" value="1"/>
</dbReference>
<dbReference type="CDD" id="cd01750">
    <property type="entry name" value="GATase1_CobQ"/>
    <property type="match status" value="1"/>
</dbReference>
<dbReference type="Gene3D" id="3.40.50.880">
    <property type="match status" value="1"/>
</dbReference>
<dbReference type="Gene3D" id="3.40.50.300">
    <property type="entry name" value="P-loop containing nucleotide triphosphate hydrolases"/>
    <property type="match status" value="1"/>
</dbReference>
<dbReference type="HAMAP" id="MF_00028">
    <property type="entry name" value="CobQ"/>
    <property type="match status" value="1"/>
</dbReference>
<dbReference type="InterPro" id="IPR029062">
    <property type="entry name" value="Class_I_gatase-like"/>
</dbReference>
<dbReference type="InterPro" id="IPR002586">
    <property type="entry name" value="CobQ/CobB/MinD/ParA_Nub-bd_dom"/>
</dbReference>
<dbReference type="InterPro" id="IPR033949">
    <property type="entry name" value="CobQ_GATase1"/>
</dbReference>
<dbReference type="InterPro" id="IPR047045">
    <property type="entry name" value="CobQ_N"/>
</dbReference>
<dbReference type="InterPro" id="IPR004459">
    <property type="entry name" value="CobQ_synth"/>
</dbReference>
<dbReference type="InterPro" id="IPR011698">
    <property type="entry name" value="GATase_3"/>
</dbReference>
<dbReference type="InterPro" id="IPR027417">
    <property type="entry name" value="P-loop_NTPase"/>
</dbReference>
<dbReference type="NCBIfam" id="TIGR00313">
    <property type="entry name" value="cobQ"/>
    <property type="match status" value="1"/>
</dbReference>
<dbReference type="NCBIfam" id="NF001989">
    <property type="entry name" value="PRK00784.1"/>
    <property type="match status" value="1"/>
</dbReference>
<dbReference type="PANTHER" id="PTHR21343:SF1">
    <property type="entry name" value="COBYRIC ACID SYNTHASE"/>
    <property type="match status" value="1"/>
</dbReference>
<dbReference type="PANTHER" id="PTHR21343">
    <property type="entry name" value="DETHIOBIOTIN SYNTHETASE"/>
    <property type="match status" value="1"/>
</dbReference>
<dbReference type="Pfam" id="PF01656">
    <property type="entry name" value="CbiA"/>
    <property type="match status" value="1"/>
</dbReference>
<dbReference type="Pfam" id="PF07685">
    <property type="entry name" value="GATase_3"/>
    <property type="match status" value="1"/>
</dbReference>
<dbReference type="SUPFAM" id="SSF52317">
    <property type="entry name" value="Class I glutamine amidotransferase-like"/>
    <property type="match status" value="1"/>
</dbReference>
<dbReference type="SUPFAM" id="SSF52540">
    <property type="entry name" value="P-loop containing nucleoside triphosphate hydrolases"/>
    <property type="match status" value="1"/>
</dbReference>
<dbReference type="PROSITE" id="PS51274">
    <property type="entry name" value="GATASE_COBBQ"/>
    <property type="match status" value="1"/>
</dbReference>
<feature type="chain" id="PRO_1000201970" description="Cobyric acid synthase">
    <location>
        <begin position="1"/>
        <end position="480"/>
    </location>
</feature>
<feature type="domain" description="GATase cobBQ-type" evidence="1">
    <location>
        <begin position="246"/>
        <end position="434"/>
    </location>
</feature>
<feature type="active site" description="Nucleophile" evidence="1">
    <location>
        <position position="328"/>
    </location>
</feature>
<feature type="active site" evidence="1">
    <location>
        <position position="426"/>
    </location>
</feature>
<gene>
    <name evidence="1" type="primary">cobQ</name>
    <name type="ordered locus">Msil_3272</name>
</gene>
<name>COBQ_METSB</name>